<accession>C1EP96</accession>
<gene>
    <name type="ordered locus">BCA_3972</name>
</gene>
<evidence type="ECO:0000255" key="1">
    <source>
        <dbReference type="HAMAP-Rule" id="MF_01503"/>
    </source>
</evidence>
<dbReference type="EMBL" id="CP001407">
    <property type="protein sequence ID" value="ACO28155.1"/>
    <property type="molecule type" value="Genomic_DNA"/>
</dbReference>
<dbReference type="SMR" id="C1EP96"/>
<dbReference type="KEGG" id="bcx:BCA_3972"/>
<dbReference type="PATRIC" id="fig|572264.18.peg.3928"/>
<dbReference type="Proteomes" id="UP000002210">
    <property type="component" value="Chromosome"/>
</dbReference>
<dbReference type="HAMAP" id="MF_01503">
    <property type="entry name" value="RemA"/>
    <property type="match status" value="1"/>
</dbReference>
<dbReference type="InterPro" id="IPR007169">
    <property type="entry name" value="RemA-like"/>
</dbReference>
<dbReference type="NCBIfam" id="NF046064">
    <property type="entry name" value="MtxBflmRegRemA"/>
    <property type="match status" value="1"/>
</dbReference>
<dbReference type="NCBIfam" id="NF003315">
    <property type="entry name" value="PRK04323.1"/>
    <property type="match status" value="1"/>
</dbReference>
<dbReference type="PANTHER" id="PTHR38449:SF1">
    <property type="entry name" value="REGULATORY PROTEIN SSL2874-RELATED"/>
    <property type="match status" value="1"/>
</dbReference>
<dbReference type="PANTHER" id="PTHR38449">
    <property type="entry name" value="REGULATORY PROTEIN TM_1690-RELATED"/>
    <property type="match status" value="1"/>
</dbReference>
<dbReference type="Pfam" id="PF04025">
    <property type="entry name" value="RemA-like"/>
    <property type="match status" value="1"/>
</dbReference>
<feature type="chain" id="PRO_1000185011" description="Putative regulatory protein BCA_3972">
    <location>
        <begin position="1"/>
        <end position="87"/>
    </location>
</feature>
<proteinExistence type="inferred from homology"/>
<protein>
    <recommendedName>
        <fullName evidence="1">Putative regulatory protein BCA_3972</fullName>
    </recommendedName>
</protein>
<organism>
    <name type="scientific">Bacillus cereus (strain 03BB102)</name>
    <dbReference type="NCBI Taxonomy" id="572264"/>
    <lineage>
        <taxon>Bacteria</taxon>
        <taxon>Bacillati</taxon>
        <taxon>Bacillota</taxon>
        <taxon>Bacilli</taxon>
        <taxon>Bacillales</taxon>
        <taxon>Bacillaceae</taxon>
        <taxon>Bacillus</taxon>
        <taxon>Bacillus cereus group</taxon>
    </lineage>
</organism>
<comment type="similarity">
    <text evidence="1">Belongs to the RemA family.</text>
</comment>
<name>Y3972_BACC3</name>
<reference key="1">
    <citation type="submission" date="2009-02" db="EMBL/GenBank/DDBJ databases">
        <title>Genome sequence of Bacillus cereus 03BB102.</title>
        <authorList>
            <person name="Dodson R.J."/>
            <person name="Jackson P."/>
            <person name="Munk A.C."/>
            <person name="Brettin T."/>
            <person name="Bruce D."/>
            <person name="Detter C."/>
            <person name="Tapia R."/>
            <person name="Han C."/>
            <person name="Sutton G."/>
            <person name="Sims D."/>
        </authorList>
    </citation>
    <scope>NUCLEOTIDE SEQUENCE [LARGE SCALE GENOMIC DNA]</scope>
    <source>
        <strain>03BB102</strain>
    </source>
</reference>
<sequence length="87" mass="9647">MAMRFLNIGYGNIVSAHRIIAIVSPESAPIKRTVQEAREHNALLDATYGRKTRAVIVMDDGHVVLSPIQPETIAHRLNNKEDLSEEG</sequence>